<keyword id="KW-1185">Reference proteome</keyword>
<reference key="1">
    <citation type="journal article" date="2013" name="Nature">
        <title>The zebrafish reference genome sequence and its relationship to the human genome.</title>
        <authorList>
            <person name="Howe K."/>
            <person name="Clark M.D."/>
            <person name="Torroja C.F."/>
            <person name="Torrance J."/>
            <person name="Berthelot C."/>
            <person name="Muffato M."/>
            <person name="Collins J.E."/>
            <person name="Humphray S."/>
            <person name="McLaren K."/>
            <person name="Matthews L."/>
            <person name="McLaren S."/>
            <person name="Sealy I."/>
            <person name="Caccamo M."/>
            <person name="Churcher C."/>
            <person name="Scott C."/>
            <person name="Barrett J.C."/>
            <person name="Koch R."/>
            <person name="Rauch G.J."/>
            <person name="White S."/>
            <person name="Chow W."/>
            <person name="Kilian B."/>
            <person name="Quintais L.T."/>
            <person name="Guerra-Assuncao J.A."/>
            <person name="Zhou Y."/>
            <person name="Gu Y."/>
            <person name="Yen J."/>
            <person name="Vogel J.H."/>
            <person name="Eyre T."/>
            <person name="Redmond S."/>
            <person name="Banerjee R."/>
            <person name="Chi J."/>
            <person name="Fu B."/>
            <person name="Langley E."/>
            <person name="Maguire S.F."/>
            <person name="Laird G.K."/>
            <person name="Lloyd D."/>
            <person name="Kenyon E."/>
            <person name="Donaldson S."/>
            <person name="Sehra H."/>
            <person name="Almeida-King J."/>
            <person name="Loveland J."/>
            <person name="Trevanion S."/>
            <person name="Jones M."/>
            <person name="Quail M."/>
            <person name="Willey D."/>
            <person name="Hunt A."/>
            <person name="Burton J."/>
            <person name="Sims S."/>
            <person name="McLay K."/>
            <person name="Plumb B."/>
            <person name="Davis J."/>
            <person name="Clee C."/>
            <person name="Oliver K."/>
            <person name="Clark R."/>
            <person name="Riddle C."/>
            <person name="Elliot D."/>
            <person name="Threadgold G."/>
            <person name="Harden G."/>
            <person name="Ware D."/>
            <person name="Begum S."/>
            <person name="Mortimore B."/>
            <person name="Kerry G."/>
            <person name="Heath P."/>
            <person name="Phillimore B."/>
            <person name="Tracey A."/>
            <person name="Corby N."/>
            <person name="Dunn M."/>
            <person name="Johnson C."/>
            <person name="Wood J."/>
            <person name="Clark S."/>
            <person name="Pelan S."/>
            <person name="Griffiths G."/>
            <person name="Smith M."/>
            <person name="Glithero R."/>
            <person name="Howden P."/>
            <person name="Barker N."/>
            <person name="Lloyd C."/>
            <person name="Stevens C."/>
            <person name="Harley J."/>
            <person name="Holt K."/>
            <person name="Panagiotidis G."/>
            <person name="Lovell J."/>
            <person name="Beasley H."/>
            <person name="Henderson C."/>
            <person name="Gordon D."/>
            <person name="Auger K."/>
            <person name="Wright D."/>
            <person name="Collins J."/>
            <person name="Raisen C."/>
            <person name="Dyer L."/>
            <person name="Leung K."/>
            <person name="Robertson L."/>
            <person name="Ambridge K."/>
            <person name="Leongamornlert D."/>
            <person name="McGuire S."/>
            <person name="Gilderthorp R."/>
            <person name="Griffiths C."/>
            <person name="Manthravadi D."/>
            <person name="Nichol S."/>
            <person name="Barker G."/>
            <person name="Whitehead S."/>
            <person name="Kay M."/>
            <person name="Brown J."/>
            <person name="Murnane C."/>
            <person name="Gray E."/>
            <person name="Humphries M."/>
            <person name="Sycamore N."/>
            <person name="Barker D."/>
            <person name="Saunders D."/>
            <person name="Wallis J."/>
            <person name="Babbage A."/>
            <person name="Hammond S."/>
            <person name="Mashreghi-Mohammadi M."/>
            <person name="Barr L."/>
            <person name="Martin S."/>
            <person name="Wray P."/>
            <person name="Ellington A."/>
            <person name="Matthews N."/>
            <person name="Ellwood M."/>
            <person name="Woodmansey R."/>
            <person name="Clark G."/>
            <person name="Cooper J."/>
            <person name="Tromans A."/>
            <person name="Grafham D."/>
            <person name="Skuce C."/>
            <person name="Pandian R."/>
            <person name="Andrews R."/>
            <person name="Harrison E."/>
            <person name="Kimberley A."/>
            <person name="Garnett J."/>
            <person name="Fosker N."/>
            <person name="Hall R."/>
            <person name="Garner P."/>
            <person name="Kelly D."/>
            <person name="Bird C."/>
            <person name="Palmer S."/>
            <person name="Gehring I."/>
            <person name="Berger A."/>
            <person name="Dooley C.M."/>
            <person name="Ersan-Urun Z."/>
            <person name="Eser C."/>
            <person name="Geiger H."/>
            <person name="Geisler M."/>
            <person name="Karotki L."/>
            <person name="Kirn A."/>
            <person name="Konantz J."/>
            <person name="Konantz M."/>
            <person name="Oberlander M."/>
            <person name="Rudolph-Geiger S."/>
            <person name="Teucke M."/>
            <person name="Lanz C."/>
            <person name="Raddatz G."/>
            <person name="Osoegawa K."/>
            <person name="Zhu B."/>
            <person name="Rapp A."/>
            <person name="Widaa S."/>
            <person name="Langford C."/>
            <person name="Yang F."/>
            <person name="Schuster S.C."/>
            <person name="Carter N.P."/>
            <person name="Harrow J."/>
            <person name="Ning Z."/>
            <person name="Herrero J."/>
            <person name="Searle S.M."/>
            <person name="Enright A."/>
            <person name="Geisler R."/>
            <person name="Plasterk R.H."/>
            <person name="Lee C."/>
            <person name="Westerfield M."/>
            <person name="de Jong P.J."/>
            <person name="Zon L.I."/>
            <person name="Postlethwait J.H."/>
            <person name="Nusslein-Volhard C."/>
            <person name="Hubbard T.J."/>
            <person name="Roest Crollius H."/>
            <person name="Rogers J."/>
            <person name="Stemple D.L."/>
        </authorList>
    </citation>
    <scope>NUCLEOTIDE SEQUENCE [LARGE SCALE GENOMIC DNA]</scope>
    <source>
        <strain>Tuebingen</strain>
    </source>
</reference>
<reference key="2">
    <citation type="submission" date="2005-07" db="EMBL/GenBank/DDBJ databases">
        <authorList>
            <consortium name="NIH - Zebrafish Gene Collection (ZGC) project"/>
        </authorList>
    </citation>
    <scope>NUCLEOTIDE SEQUENCE [LARGE SCALE MRNA]</scope>
    <source>
        <strain>AB</strain>
    </source>
</reference>
<reference key="3">
    <citation type="journal article" date="2011" name="Neurobiol. Aging">
        <title>Mutational screening and zebrafish functional analysis of GIGYF2 as a Parkinson-disease gene.</title>
        <authorList>
            <person name="Guella I."/>
            <person name="Pistocchi A."/>
            <person name="Asselta R."/>
            <person name="Rimoldi V."/>
            <person name="Ghilardi A."/>
            <person name="Sironi F."/>
            <person name="Trotta L."/>
            <person name="Primignani P."/>
            <person name="Zini M."/>
            <person name="Zecchinelli A."/>
            <person name="Coviello D."/>
            <person name="Pezzoli G."/>
            <person name="Del Giacco L."/>
            <person name="Duga S."/>
            <person name="Goldwurm S."/>
        </authorList>
    </citation>
    <scope>DEVELOPMENTAL STAGE</scope>
    <scope>DISRUPTION PHENOTYPE</scope>
</reference>
<evidence type="ECO:0000250" key="1">
    <source>
        <dbReference type="UniProtKB" id="Q6Y7W6"/>
    </source>
</evidence>
<evidence type="ECO:0000250" key="2">
    <source>
        <dbReference type="UniProtKB" id="Q6Y7W8"/>
    </source>
</evidence>
<evidence type="ECO:0000255" key="3">
    <source>
        <dbReference type="PROSITE-ProRule" id="PRU00101"/>
    </source>
</evidence>
<evidence type="ECO:0000256" key="4">
    <source>
        <dbReference type="SAM" id="MobiDB-lite"/>
    </source>
</evidence>
<evidence type="ECO:0000269" key="5">
    <source>
    </source>
</evidence>
<evidence type="ECO:0000305" key="6"/>
<gene>
    <name type="primary">gigyf2</name>
    <name type="synonym">perq2</name>
    <name type="synonym">tnrc15</name>
    <name type="ORF">zgc:111944</name>
</gene>
<proteinExistence type="evidence at transcript level"/>
<name>GGYF2_DANRE</name>
<accession>Q4KME6</accession>
<accession>B0S7J5</accession>
<organism>
    <name type="scientific">Danio rerio</name>
    <name type="common">Zebrafish</name>
    <name type="synonym">Brachydanio rerio</name>
    <dbReference type="NCBI Taxonomy" id="7955"/>
    <lineage>
        <taxon>Eukaryota</taxon>
        <taxon>Metazoa</taxon>
        <taxon>Chordata</taxon>
        <taxon>Craniata</taxon>
        <taxon>Vertebrata</taxon>
        <taxon>Euteleostomi</taxon>
        <taxon>Actinopterygii</taxon>
        <taxon>Neopterygii</taxon>
        <taxon>Teleostei</taxon>
        <taxon>Ostariophysi</taxon>
        <taxon>Cypriniformes</taxon>
        <taxon>Danionidae</taxon>
        <taxon>Danioninae</taxon>
        <taxon>Danio</taxon>
    </lineage>
</organism>
<protein>
    <recommendedName>
        <fullName>GRB10-interacting GYF protein 2</fullName>
    </recommendedName>
    <alternativeName>
        <fullName>PERQ amino acid-rich with GYF domain-containing protein 2</fullName>
    </alternativeName>
    <alternativeName>
        <fullName>Trinucleotide repeat-containing gene 15 protein</fullName>
    </alternativeName>
</protein>
<sequence length="1329" mass="152268">MAETQTLNFGPEWLRALAGGVGSSIVASPPLSPALPKYKLADYRYGREEMLALYVKDNMIPVDLHDKEFLPILQEEPLPPLALVPFTEEEQRNFSMSVNSAAVLRLTGRGGGTVAGAPRGRSSSRGRGRGRGDGFYQRSFDDVEGGFGRGGREMHRSQSWEERGDRRFEKPGRKDPDGAPAHFPLNHIRANYEDPAAVNARKFIHAECDNWRTTRDELNGEEDDNGWRLAGARRENERWCPPSPDGPRSAGWREHPDQRRRFGFGDEERSGYRRPRSGSGSAEEERDSLPEWCLEDAEEETGTFDSSGAFLSLKVRALEKAPKEPILEEAELDFRPLEENDEYAEKDDSETEQTKDTDTNTRHESDRNEENCKSEEPSPVAVPFSAVVTPPKATTPAPIQPVHLEKAEDKERPSERTTLPEIRHELSKAPLHTALSNSIVEAISIPHVANKLPDLPVPAPSVLPVKSVPPQSQQVKPIEMPVSVPPALLRSTGSVGPISRPSALPSDLDEDEGLKHFEQEAEKMVAYLQDGGVDDERLASKIGPKPSALPITNEAAFKWFYKDPQGEIQGPFNNQEMSEWFQAGYFTMTLQVKRGCDEMFQPLGEMIKLWGRVPFTPGPTLPPILGDADQERMKRQQEINALNMYQLQQMQYQYLLRQQYALQQKVLNSAPPPPPPPQQQLNLLLHQALKIRTPEPQQSLLPPVTRSMSVPDSGSVWEMQNPSTQASCSPNMQPAAPSTWEGSSVWDLPLDNMPQASSIEQLQLEKAKALKLEMERREAELRAKREEEERKRLEEALRARQEEERKRLEEEELARRKQEEALKRQREQEEAQRRKKEEEERLAQEEALRRLEERRREEEERRQREEFLRKQQEEERRKQEELEAQRRREEEKRLEEEAAAAAAALLRQQQEEQKKREQEAQRQQELQRQRQQQQEALRRLQQQQQQQQLAQMKLPSSSKWGQQSTTANSLSQSQNALSLAEIQKLEEERERQTREEQRRQQQELQRVQQQQPQTKLPGWGSVAKQPMATKSLLEIQREEAQQMKQRKDQQQQQQQQQQPPPQPQPQQHSTNTQQNRTQNRAAINTSVWGSVNNVSSNWMMDSSVWGDTQNSNIGFWDEAVKEAAPPQTTRKSHTPKNKGNANLSNSSSGKASKKVEEEEKLLKLFQGANKNQDGFMQWCEQTLHTLNTANNLDVPTFASFLKEVDSPYEVHDYVRAYLGDTPQAKDFAKQFLERRAKQNDNQQKPQQGQQQKQQESVWGIREVPQSVLLQQQQQQQLQQQQQQRFETVTSGKKKKKQKMVRADPSLLGFSVNASSERLNMGEIETVEDF</sequence>
<comment type="function">
    <text evidence="1">Key component of the 4EHP-GYF2 complex, a multiprotein complex that acts as a repressor of translation initiation. In association with EIF4E2, assists ribosome-associated quality control (RQC) by sequestering the mRNA cap, blocking ribosome initiation and decreasing the translational load on problematic messages.</text>
</comment>
<comment type="subunit">
    <text evidence="1 2">Component of the 4EHP-GYF2 complex (By similarity).</text>
</comment>
<comment type="developmental stage">
    <text evidence="5">Maternally expressed: detected from the 1-cell stage, prior to the onset of zygotic expression. From blastula until gastrula stages, strongly expressed throughout the blastoderm. At 28 hours post-fertilization (hpf), highly expressed in the central nervous system (CNS), whereas a weaker expression is found in the somites. At later stages of development (48 hpf), expression persists in well-defined structures of the CNS, such as the diencephalon, the mesencephalon, the cerebellum and the rhombencephalon, and remains detectable in the somites.</text>
</comment>
<comment type="disruption phenotype">
    <text evidence="5">Morpholino knockdown show mild, intermediate, and severe phenotypes. Embryos with severe phenotype display a disrupted body pattern, embryos with intermediate phenotype show defects in the head and eye structures, while embryos with mild phenotype only show a twist in the terminal part of the tail. Embryos do not show important cell loss in diencephalic dopaminergic (DA) neuron clusters.</text>
</comment>
<comment type="similarity">
    <text evidence="6">Belongs to the GIGYF family.</text>
</comment>
<dbReference type="EMBL" id="BX677676">
    <property type="status" value="NOT_ANNOTATED_CDS"/>
    <property type="molecule type" value="Genomic_DNA"/>
</dbReference>
<dbReference type="EMBL" id="BX890560">
    <property type="status" value="NOT_ANNOTATED_CDS"/>
    <property type="molecule type" value="Genomic_DNA"/>
</dbReference>
<dbReference type="EMBL" id="BX890608">
    <property type="status" value="NOT_ANNOTATED_CDS"/>
    <property type="molecule type" value="Genomic_DNA"/>
</dbReference>
<dbReference type="EMBL" id="BC098603">
    <property type="protein sequence ID" value="AAH98603.1"/>
    <property type="molecule type" value="mRNA"/>
</dbReference>
<dbReference type="RefSeq" id="NP_001025332.2">
    <property type="nucleotide sequence ID" value="NM_001030161.2"/>
</dbReference>
<dbReference type="SMR" id="Q4KME6"/>
<dbReference type="FunCoup" id="Q4KME6">
    <property type="interactions" value="1578"/>
</dbReference>
<dbReference type="STRING" id="7955.ENSDARP00000056276"/>
<dbReference type="PaxDb" id="7955-ENSDARP00000056276"/>
<dbReference type="Ensembl" id="ENSDART00000056277">
    <property type="protein sequence ID" value="ENSDARP00000056276"/>
    <property type="gene ID" value="ENSDARG00000009735"/>
</dbReference>
<dbReference type="GeneID" id="561830"/>
<dbReference type="KEGG" id="dre:561830"/>
<dbReference type="AGR" id="ZFIN:ZDB-GENE-050706-185"/>
<dbReference type="CTD" id="26058"/>
<dbReference type="ZFIN" id="ZDB-GENE-050706-185">
    <property type="gene designation" value="gigyf2"/>
</dbReference>
<dbReference type="eggNOG" id="KOG1862">
    <property type="taxonomic scope" value="Eukaryota"/>
</dbReference>
<dbReference type="InParanoid" id="Q4KME6"/>
<dbReference type="OMA" id="QNRICLQ"/>
<dbReference type="OrthoDB" id="48509at2759"/>
<dbReference type="PhylomeDB" id="Q4KME6"/>
<dbReference type="TreeFam" id="TF325513"/>
<dbReference type="PRO" id="PR:Q4KME6"/>
<dbReference type="Proteomes" id="UP000000437">
    <property type="component" value="Alternate scaffold 2"/>
</dbReference>
<dbReference type="Proteomes" id="UP000000437">
    <property type="component" value="Chromosome 2"/>
</dbReference>
<dbReference type="Bgee" id="ENSDARG00000009735">
    <property type="expression patterns" value="Expressed in cleaving embryo and 32 other cell types or tissues"/>
</dbReference>
<dbReference type="GO" id="GO:0005829">
    <property type="term" value="C:cytosol"/>
    <property type="evidence" value="ECO:0000318"/>
    <property type="project" value="GO_Central"/>
</dbReference>
<dbReference type="GO" id="GO:0016020">
    <property type="term" value="C:membrane"/>
    <property type="evidence" value="ECO:0000318"/>
    <property type="project" value="GO_Central"/>
</dbReference>
<dbReference type="GO" id="GO:0043204">
    <property type="term" value="C:perikaryon"/>
    <property type="evidence" value="ECO:0000318"/>
    <property type="project" value="GO_Central"/>
</dbReference>
<dbReference type="GO" id="GO:1990635">
    <property type="term" value="C:proximal dendrite"/>
    <property type="evidence" value="ECO:0000318"/>
    <property type="project" value="GO_Central"/>
</dbReference>
<dbReference type="GO" id="GO:0031982">
    <property type="term" value="C:vesicle"/>
    <property type="evidence" value="ECO:0000318"/>
    <property type="project" value="GO_Central"/>
</dbReference>
<dbReference type="GO" id="GO:0048009">
    <property type="term" value="P:insulin-like growth factor receptor signaling pathway"/>
    <property type="evidence" value="ECO:0000318"/>
    <property type="project" value="GO_Central"/>
</dbReference>
<dbReference type="CDD" id="cd00072">
    <property type="entry name" value="GYF"/>
    <property type="match status" value="1"/>
</dbReference>
<dbReference type="Gene3D" id="3.30.1490.40">
    <property type="match status" value="1"/>
</dbReference>
<dbReference type="InterPro" id="IPR051640">
    <property type="entry name" value="GRB10-interact_GYF"/>
</dbReference>
<dbReference type="InterPro" id="IPR003169">
    <property type="entry name" value="GYF"/>
</dbReference>
<dbReference type="InterPro" id="IPR035445">
    <property type="entry name" value="GYF-like_dom_sf"/>
</dbReference>
<dbReference type="PANTHER" id="PTHR14445">
    <property type="entry name" value="GRB10 INTERACTING GYF PROTEIN"/>
    <property type="match status" value="1"/>
</dbReference>
<dbReference type="PANTHER" id="PTHR14445:SF38">
    <property type="entry name" value="GRB10-INTERACTING GYF PROTEIN 2"/>
    <property type="match status" value="1"/>
</dbReference>
<dbReference type="Pfam" id="PF02213">
    <property type="entry name" value="GYF"/>
    <property type="match status" value="1"/>
</dbReference>
<dbReference type="SMART" id="SM00444">
    <property type="entry name" value="GYF"/>
    <property type="match status" value="1"/>
</dbReference>
<dbReference type="SUPFAM" id="SSF55277">
    <property type="entry name" value="GYF domain"/>
    <property type="match status" value="1"/>
</dbReference>
<dbReference type="PROSITE" id="PS50829">
    <property type="entry name" value="GYF"/>
    <property type="match status" value="1"/>
</dbReference>
<feature type="chain" id="PRO_0000270839" description="GRB10-interacting GYF protein 2">
    <location>
        <begin position="1"/>
        <end position="1329"/>
    </location>
</feature>
<feature type="domain" description="GYF" evidence="3">
    <location>
        <begin position="556"/>
        <end position="604"/>
    </location>
</feature>
<feature type="region of interest" description="Disordered" evidence="4">
    <location>
        <begin position="109"/>
        <end position="184"/>
    </location>
</feature>
<feature type="region of interest" description="Disordered" evidence="4">
    <location>
        <begin position="236"/>
        <end position="419"/>
    </location>
</feature>
<feature type="region of interest" description="Disordered" evidence="4">
    <location>
        <begin position="720"/>
        <end position="740"/>
    </location>
</feature>
<feature type="region of interest" description="Disordered" evidence="4">
    <location>
        <begin position="781"/>
        <end position="1081"/>
    </location>
</feature>
<feature type="region of interest" description="Disordered" evidence="4">
    <location>
        <begin position="1122"/>
        <end position="1155"/>
    </location>
</feature>
<feature type="region of interest" description="Disordered" evidence="4">
    <location>
        <begin position="1236"/>
        <end position="1256"/>
    </location>
</feature>
<feature type="region of interest" description="Disordered" evidence="4">
    <location>
        <begin position="1279"/>
        <end position="1302"/>
    </location>
</feature>
<feature type="compositionally biased region" description="Basic and acidic residues" evidence="4">
    <location>
        <begin position="150"/>
        <end position="177"/>
    </location>
</feature>
<feature type="compositionally biased region" description="Basic and acidic residues" evidence="4">
    <location>
        <begin position="251"/>
        <end position="271"/>
    </location>
</feature>
<feature type="compositionally biased region" description="Acidic residues" evidence="4">
    <location>
        <begin position="293"/>
        <end position="302"/>
    </location>
</feature>
<feature type="compositionally biased region" description="Basic and acidic residues" evidence="4">
    <location>
        <begin position="316"/>
        <end position="338"/>
    </location>
</feature>
<feature type="compositionally biased region" description="Acidic residues" evidence="4">
    <location>
        <begin position="339"/>
        <end position="351"/>
    </location>
</feature>
<feature type="compositionally biased region" description="Basic and acidic residues" evidence="4">
    <location>
        <begin position="352"/>
        <end position="376"/>
    </location>
</feature>
<feature type="compositionally biased region" description="Low complexity" evidence="4">
    <location>
        <begin position="377"/>
        <end position="397"/>
    </location>
</feature>
<feature type="compositionally biased region" description="Basic and acidic residues" evidence="4">
    <location>
        <begin position="403"/>
        <end position="415"/>
    </location>
</feature>
<feature type="compositionally biased region" description="Polar residues" evidence="4">
    <location>
        <begin position="720"/>
        <end position="732"/>
    </location>
</feature>
<feature type="compositionally biased region" description="Basic and acidic residues" evidence="4">
    <location>
        <begin position="781"/>
        <end position="896"/>
    </location>
</feature>
<feature type="compositionally biased region" description="Low complexity" evidence="4">
    <location>
        <begin position="899"/>
        <end position="908"/>
    </location>
</feature>
<feature type="compositionally biased region" description="Basic and acidic residues" evidence="4">
    <location>
        <begin position="909"/>
        <end position="928"/>
    </location>
</feature>
<feature type="compositionally biased region" description="Low complexity" evidence="4">
    <location>
        <begin position="929"/>
        <end position="951"/>
    </location>
</feature>
<feature type="compositionally biased region" description="Polar residues" evidence="4">
    <location>
        <begin position="954"/>
        <end position="966"/>
    </location>
</feature>
<feature type="compositionally biased region" description="Low complexity" evidence="4">
    <location>
        <begin position="967"/>
        <end position="980"/>
    </location>
</feature>
<feature type="compositionally biased region" description="Basic and acidic residues" evidence="4">
    <location>
        <begin position="983"/>
        <end position="1001"/>
    </location>
</feature>
<feature type="compositionally biased region" description="Low complexity" evidence="4">
    <location>
        <begin position="1002"/>
        <end position="1013"/>
    </location>
</feature>
<feature type="compositionally biased region" description="Basic and acidic residues" evidence="4">
    <location>
        <begin position="1035"/>
        <end position="1049"/>
    </location>
</feature>
<feature type="compositionally biased region" description="Polar residues" evidence="4">
    <location>
        <begin position="1068"/>
        <end position="1081"/>
    </location>
</feature>
<feature type="compositionally biased region" description="Low complexity" evidence="4">
    <location>
        <begin position="1239"/>
        <end position="1254"/>
    </location>
</feature>
<feature type="sequence conflict" description="In Ref. 2; AAH98603." evidence="6" ref="2">
    <original>S</original>
    <variation>N</variation>
    <location>
        <position position="159"/>
    </location>
</feature>
<feature type="sequence conflict" description="In Ref. 2; AAH98603." evidence="6" ref="2">
    <original>H</original>
    <variation>Q</variation>
    <location>
        <position position="363"/>
    </location>
</feature>
<feature type="sequence conflict" description="In Ref. 2; AAH98603." evidence="6" ref="2">
    <original>V</original>
    <variation>D</variation>
    <location>
        <position position="388"/>
    </location>
</feature>
<feature type="sequence conflict" description="In Ref. 2; AAH98603." evidence="6" ref="2">
    <original>D</original>
    <variation>V</variation>
    <location>
        <position position="597"/>
    </location>
</feature>
<feature type="sequence conflict" description="In Ref. 2; AAH98603." evidence="6" ref="2">
    <original>K</original>
    <variation>E</variation>
    <location>
        <position position="914"/>
    </location>
</feature>
<feature type="sequence conflict" description="In Ref. 2; AAH98603." evidence="6" ref="2">
    <original>D</original>
    <variation>DQQQQQQQ</variation>
    <location>
        <position position="1048"/>
    </location>
</feature>
<feature type="sequence conflict" description="In Ref. 2; AAH98603." evidence="6" ref="2">
    <original>N</original>
    <variation>I</variation>
    <location>
        <position position="1071"/>
    </location>
</feature>
<feature type="sequence conflict" description="In Ref. 2; AAH98603." evidence="6" ref="2">
    <original>QQL</original>
    <variation>LQ</variation>
    <location>
        <begin position="1275"/>
        <end position="1277"/>
    </location>
</feature>